<dbReference type="EMBL" id="CP000941">
    <property type="protein sequence ID" value="ACA12647.1"/>
    <property type="molecule type" value="Genomic_DNA"/>
</dbReference>
<dbReference type="RefSeq" id="WP_004083551.1">
    <property type="nucleotide sequence ID" value="NC_010513.1"/>
</dbReference>
<dbReference type="SMR" id="B0U468"/>
<dbReference type="KEGG" id="xfm:Xfasm12_1748"/>
<dbReference type="HOGENOM" id="CLU_115353_1_0_6"/>
<dbReference type="GO" id="GO:0003676">
    <property type="term" value="F:nucleic acid binding"/>
    <property type="evidence" value="ECO:0007669"/>
    <property type="project" value="InterPro"/>
</dbReference>
<dbReference type="Gene3D" id="3.40.1350.10">
    <property type="match status" value="1"/>
</dbReference>
<dbReference type="HAMAP" id="MF_00048">
    <property type="entry name" value="UPF0102"/>
    <property type="match status" value="1"/>
</dbReference>
<dbReference type="InterPro" id="IPR011335">
    <property type="entry name" value="Restrct_endonuc-II-like"/>
</dbReference>
<dbReference type="InterPro" id="IPR011856">
    <property type="entry name" value="tRNA_endonuc-like_dom_sf"/>
</dbReference>
<dbReference type="InterPro" id="IPR003509">
    <property type="entry name" value="UPF0102_YraN-like"/>
</dbReference>
<dbReference type="NCBIfam" id="NF009150">
    <property type="entry name" value="PRK12497.1-3"/>
    <property type="match status" value="1"/>
</dbReference>
<dbReference type="NCBIfam" id="TIGR00252">
    <property type="entry name" value="YraN family protein"/>
    <property type="match status" value="1"/>
</dbReference>
<dbReference type="PANTHER" id="PTHR34039">
    <property type="entry name" value="UPF0102 PROTEIN YRAN"/>
    <property type="match status" value="1"/>
</dbReference>
<dbReference type="PANTHER" id="PTHR34039:SF1">
    <property type="entry name" value="UPF0102 PROTEIN YRAN"/>
    <property type="match status" value="1"/>
</dbReference>
<dbReference type="Pfam" id="PF02021">
    <property type="entry name" value="UPF0102"/>
    <property type="match status" value="1"/>
</dbReference>
<dbReference type="SUPFAM" id="SSF52980">
    <property type="entry name" value="Restriction endonuclease-like"/>
    <property type="match status" value="1"/>
</dbReference>
<sequence length="121" mass="13996">MLNRRDCGAAVEVAARRHLERAGLRWLASNVCFRGGELDLVMYDVMSVVFVEVRYRQQESHGSAAQSVDRRKRRKLVMAAQLFLQRHPFLAQVPCRFDVVEGAGRPLQLHWIRDAFRLDDC</sequence>
<gene>
    <name type="ordered locus">Xfasm12_1748</name>
</gene>
<feature type="chain" id="PRO_1000091275" description="UPF0102 protein Xfasm12_1748">
    <location>
        <begin position="1"/>
        <end position="121"/>
    </location>
</feature>
<reference key="1">
    <citation type="journal article" date="2010" name="J. Bacteriol.">
        <title>Whole genome sequences of two Xylella fastidiosa strains (M12 and M23) causing almond leaf scorch disease in California.</title>
        <authorList>
            <person name="Chen J."/>
            <person name="Xie G."/>
            <person name="Han S."/>
            <person name="Chertkov O."/>
            <person name="Sims D."/>
            <person name="Civerolo E.L."/>
        </authorList>
    </citation>
    <scope>NUCLEOTIDE SEQUENCE [LARGE SCALE GENOMIC DNA]</scope>
    <source>
        <strain>M12</strain>
    </source>
</reference>
<accession>B0U468</accession>
<evidence type="ECO:0000255" key="1">
    <source>
        <dbReference type="HAMAP-Rule" id="MF_00048"/>
    </source>
</evidence>
<proteinExistence type="inferred from homology"/>
<organism>
    <name type="scientific">Xylella fastidiosa (strain M12)</name>
    <dbReference type="NCBI Taxonomy" id="405440"/>
    <lineage>
        <taxon>Bacteria</taxon>
        <taxon>Pseudomonadati</taxon>
        <taxon>Pseudomonadota</taxon>
        <taxon>Gammaproteobacteria</taxon>
        <taxon>Lysobacterales</taxon>
        <taxon>Lysobacteraceae</taxon>
        <taxon>Xylella</taxon>
    </lineage>
</organism>
<protein>
    <recommendedName>
        <fullName evidence="1">UPF0102 protein Xfasm12_1748</fullName>
    </recommendedName>
</protein>
<name>Y1748_XYLFM</name>
<comment type="similarity">
    <text evidence="1">Belongs to the UPF0102 family.</text>
</comment>